<protein>
    <recommendedName>
        <fullName evidence="1">Fe/S biogenesis protein NfuA</fullName>
    </recommendedName>
</protein>
<reference key="1">
    <citation type="journal article" date="2003" name="Proc. Natl. Acad. Sci. U.S.A.">
        <title>The complete genome sequence of the Arabidopsis and tomato pathogen Pseudomonas syringae pv. tomato DC3000.</title>
        <authorList>
            <person name="Buell C.R."/>
            <person name="Joardar V."/>
            <person name="Lindeberg M."/>
            <person name="Selengut J."/>
            <person name="Paulsen I.T."/>
            <person name="Gwinn M.L."/>
            <person name="Dodson R.J."/>
            <person name="DeBoy R.T."/>
            <person name="Durkin A.S."/>
            <person name="Kolonay J.F."/>
            <person name="Madupu R."/>
            <person name="Daugherty S.C."/>
            <person name="Brinkac L.M."/>
            <person name="Beanan M.J."/>
            <person name="Haft D.H."/>
            <person name="Nelson W.C."/>
            <person name="Davidsen T.M."/>
            <person name="Zafar N."/>
            <person name="Zhou L."/>
            <person name="Liu J."/>
            <person name="Yuan Q."/>
            <person name="Khouri H.M."/>
            <person name="Fedorova N.B."/>
            <person name="Tran B."/>
            <person name="Russell D."/>
            <person name="Berry K.J."/>
            <person name="Utterback T.R."/>
            <person name="Van Aken S.E."/>
            <person name="Feldblyum T.V."/>
            <person name="D'Ascenzo M."/>
            <person name="Deng W.-L."/>
            <person name="Ramos A.R."/>
            <person name="Alfano J.R."/>
            <person name="Cartinhour S."/>
            <person name="Chatterjee A.K."/>
            <person name="Delaney T.P."/>
            <person name="Lazarowitz S.G."/>
            <person name="Martin G.B."/>
            <person name="Schneider D.J."/>
            <person name="Tang X."/>
            <person name="Bender C.L."/>
            <person name="White O."/>
            <person name="Fraser C.M."/>
            <person name="Collmer A."/>
        </authorList>
    </citation>
    <scope>NUCLEOTIDE SEQUENCE [LARGE SCALE GENOMIC DNA]</scope>
    <source>
        <strain>ATCC BAA-871 / DC3000</strain>
    </source>
</reference>
<accession>Q881Z4</accession>
<evidence type="ECO:0000255" key="1">
    <source>
        <dbReference type="HAMAP-Rule" id="MF_01637"/>
    </source>
</evidence>
<organism>
    <name type="scientific">Pseudomonas syringae pv. tomato (strain ATCC BAA-871 / DC3000)</name>
    <dbReference type="NCBI Taxonomy" id="223283"/>
    <lineage>
        <taxon>Bacteria</taxon>
        <taxon>Pseudomonadati</taxon>
        <taxon>Pseudomonadota</taxon>
        <taxon>Gammaproteobacteria</taxon>
        <taxon>Pseudomonadales</taxon>
        <taxon>Pseudomonadaceae</taxon>
        <taxon>Pseudomonas</taxon>
    </lineage>
</organism>
<feature type="chain" id="PRO_0000209483" description="Fe/S biogenesis protein NfuA">
    <location>
        <begin position="1"/>
        <end position="197"/>
    </location>
</feature>
<feature type="binding site" evidence="1">
    <location>
        <position position="155"/>
    </location>
    <ligand>
        <name>[4Fe-4S] cluster</name>
        <dbReference type="ChEBI" id="CHEBI:49883"/>
    </ligand>
</feature>
<feature type="binding site" evidence="1">
    <location>
        <position position="158"/>
    </location>
    <ligand>
        <name>[4Fe-4S] cluster</name>
        <dbReference type="ChEBI" id="CHEBI:49883"/>
    </ligand>
</feature>
<name>NFUA_PSESM</name>
<keyword id="KW-0004">4Fe-4S</keyword>
<keyword id="KW-0408">Iron</keyword>
<keyword id="KW-0411">Iron-sulfur</keyword>
<keyword id="KW-0479">Metal-binding</keyword>
<keyword id="KW-1185">Reference proteome</keyword>
<gene>
    <name evidence="1" type="primary">nfuA</name>
    <name type="ordered locus">PSPTO_2735</name>
</gene>
<dbReference type="EMBL" id="AE016853">
    <property type="protein sequence ID" value="AAO56236.1"/>
    <property type="molecule type" value="Genomic_DNA"/>
</dbReference>
<dbReference type="RefSeq" id="NP_792541.1">
    <property type="nucleotide sequence ID" value="NC_004578.1"/>
</dbReference>
<dbReference type="RefSeq" id="WP_002553665.1">
    <property type="nucleotide sequence ID" value="NC_004578.1"/>
</dbReference>
<dbReference type="SMR" id="Q881Z4"/>
<dbReference type="STRING" id="223283.PSPTO_2735"/>
<dbReference type="GeneID" id="77278303"/>
<dbReference type="KEGG" id="pst:PSPTO_2735"/>
<dbReference type="PATRIC" id="fig|223283.9.peg.2792"/>
<dbReference type="eggNOG" id="COG0316">
    <property type="taxonomic scope" value="Bacteria"/>
</dbReference>
<dbReference type="eggNOG" id="COG0694">
    <property type="taxonomic scope" value="Bacteria"/>
</dbReference>
<dbReference type="HOGENOM" id="CLU_094569_0_0_6"/>
<dbReference type="OrthoDB" id="9785450at2"/>
<dbReference type="PhylomeDB" id="Q881Z4"/>
<dbReference type="Proteomes" id="UP000002515">
    <property type="component" value="Chromosome"/>
</dbReference>
<dbReference type="GO" id="GO:0051539">
    <property type="term" value="F:4 iron, 4 sulfur cluster binding"/>
    <property type="evidence" value="ECO:0007669"/>
    <property type="project" value="UniProtKB-UniRule"/>
</dbReference>
<dbReference type="GO" id="GO:0005506">
    <property type="term" value="F:iron ion binding"/>
    <property type="evidence" value="ECO:0007669"/>
    <property type="project" value="InterPro"/>
</dbReference>
<dbReference type="GO" id="GO:0016226">
    <property type="term" value="P:iron-sulfur cluster assembly"/>
    <property type="evidence" value="ECO:0007669"/>
    <property type="project" value="UniProtKB-UniRule"/>
</dbReference>
<dbReference type="GO" id="GO:0051604">
    <property type="term" value="P:protein maturation"/>
    <property type="evidence" value="ECO:0007669"/>
    <property type="project" value="UniProtKB-UniRule"/>
</dbReference>
<dbReference type="Gene3D" id="3.30.300.130">
    <property type="entry name" value="Fe-S cluster assembly (FSCA)"/>
    <property type="match status" value="1"/>
</dbReference>
<dbReference type="Gene3D" id="2.60.300.12">
    <property type="entry name" value="HesB-like domain"/>
    <property type="match status" value="1"/>
</dbReference>
<dbReference type="HAMAP" id="MF_01637">
    <property type="entry name" value="Fe_S_biogen_NfuA"/>
    <property type="match status" value="1"/>
</dbReference>
<dbReference type="InterPro" id="IPR017726">
    <property type="entry name" value="Fe/S_biogenesis_protein_NfuA"/>
</dbReference>
<dbReference type="InterPro" id="IPR000361">
    <property type="entry name" value="FeS_biogenesis"/>
</dbReference>
<dbReference type="InterPro" id="IPR034904">
    <property type="entry name" value="FSCA_dom_sf"/>
</dbReference>
<dbReference type="InterPro" id="IPR035903">
    <property type="entry name" value="HesB-like_dom_sf"/>
</dbReference>
<dbReference type="InterPro" id="IPR001075">
    <property type="entry name" value="NIF_FeS_clus_asmbl_NifU_C"/>
</dbReference>
<dbReference type="NCBIfam" id="TIGR03341">
    <property type="entry name" value="YhgI_GntY"/>
    <property type="match status" value="1"/>
</dbReference>
<dbReference type="PANTHER" id="PTHR11178:SF51">
    <property type="entry name" value="FE_S BIOGENESIS PROTEIN NFUA"/>
    <property type="match status" value="1"/>
</dbReference>
<dbReference type="PANTHER" id="PTHR11178">
    <property type="entry name" value="IRON-SULFUR CLUSTER SCAFFOLD PROTEIN NFU-RELATED"/>
    <property type="match status" value="1"/>
</dbReference>
<dbReference type="Pfam" id="PF01521">
    <property type="entry name" value="Fe-S_biosyn"/>
    <property type="match status" value="1"/>
</dbReference>
<dbReference type="Pfam" id="PF01106">
    <property type="entry name" value="NifU"/>
    <property type="match status" value="1"/>
</dbReference>
<dbReference type="SUPFAM" id="SSF117916">
    <property type="entry name" value="Fe-S cluster assembly (FSCA) domain-like"/>
    <property type="match status" value="1"/>
</dbReference>
<dbReference type="SUPFAM" id="SSF89360">
    <property type="entry name" value="HesB-like domain"/>
    <property type="match status" value="1"/>
</dbReference>
<proteinExistence type="inferred from homology"/>
<sequence>MTAITITDAAHDYLADLLEKQNTPGIGIRVFITQPGTQYAETCIAYCKPGEEKPEDKAIGLKSFTAWIDGFSEAFLDDAVVDYATDRMGGQLTIKAPNAKVPMVNADSPINERINYYLQTEINPGLASHGGQVTLIDVVEEEAKNIAVLQFGGGCQGCGQADVTLKEGIERTLLERIPELSGVRDVTDHTQKENAYY</sequence>
<comment type="function">
    <text evidence="1">Involved in iron-sulfur cluster biogenesis. Binds a 4Fe-4S cluster, can transfer this cluster to apoproteins, and thereby intervenes in the maturation of Fe/S proteins. Could also act as a scaffold/chaperone for damaged Fe/S proteins.</text>
</comment>
<comment type="cofactor">
    <cofactor evidence="1">
        <name>[4Fe-4S] cluster</name>
        <dbReference type="ChEBI" id="CHEBI:49883"/>
    </cofactor>
    <text evidence="1">Binds 1 [4Fe-4S] cluster per subunit. The cluster is presumably bound at the interface of two monomers.</text>
</comment>
<comment type="subunit">
    <text evidence="1">Homodimer.</text>
</comment>
<comment type="similarity">
    <text evidence="1">Belongs to the NfuA family.</text>
</comment>